<proteinExistence type="inferred from homology"/>
<reference key="1">
    <citation type="submission" date="2007-09" db="EMBL/GenBank/DDBJ databases">
        <title>Complete sequence of chromosome of Serratia proteamaculans 568.</title>
        <authorList>
            <consortium name="US DOE Joint Genome Institute"/>
            <person name="Copeland A."/>
            <person name="Lucas S."/>
            <person name="Lapidus A."/>
            <person name="Barry K."/>
            <person name="Glavina del Rio T."/>
            <person name="Dalin E."/>
            <person name="Tice H."/>
            <person name="Pitluck S."/>
            <person name="Chain P."/>
            <person name="Malfatti S."/>
            <person name="Shin M."/>
            <person name="Vergez L."/>
            <person name="Schmutz J."/>
            <person name="Larimer F."/>
            <person name="Land M."/>
            <person name="Hauser L."/>
            <person name="Kyrpides N."/>
            <person name="Kim E."/>
            <person name="Taghavi S."/>
            <person name="Newman L."/>
            <person name="Vangronsveld J."/>
            <person name="van der Lelie D."/>
            <person name="Richardson P."/>
        </authorList>
    </citation>
    <scope>NUCLEOTIDE SEQUENCE [LARGE SCALE GENOMIC DNA]</scope>
    <source>
        <strain>568</strain>
    </source>
</reference>
<dbReference type="EC" id="3.5.-.-" evidence="1"/>
<dbReference type="EMBL" id="CP000826">
    <property type="protein sequence ID" value="ABV40924.1"/>
    <property type="molecule type" value="Genomic_DNA"/>
</dbReference>
<dbReference type="SMR" id="A8GCT4"/>
<dbReference type="STRING" id="399741.Spro_1821"/>
<dbReference type="KEGG" id="spe:Spro_1821"/>
<dbReference type="eggNOG" id="COG0251">
    <property type="taxonomic scope" value="Bacteria"/>
</dbReference>
<dbReference type="HOGENOM" id="CLU_100715_7_3_6"/>
<dbReference type="OrthoDB" id="583118at2"/>
<dbReference type="GO" id="GO:0005829">
    <property type="term" value="C:cytosol"/>
    <property type="evidence" value="ECO:0007669"/>
    <property type="project" value="TreeGrafter"/>
</dbReference>
<dbReference type="GO" id="GO:0019239">
    <property type="term" value="F:deaminase activity"/>
    <property type="evidence" value="ECO:0007669"/>
    <property type="project" value="TreeGrafter"/>
</dbReference>
<dbReference type="GO" id="GO:0019740">
    <property type="term" value="P:nitrogen utilization"/>
    <property type="evidence" value="ECO:0007669"/>
    <property type="project" value="UniProtKB-UniRule"/>
</dbReference>
<dbReference type="GO" id="GO:0006212">
    <property type="term" value="P:uracil catabolic process"/>
    <property type="evidence" value="ECO:0007669"/>
    <property type="project" value="UniProtKB-UniRule"/>
</dbReference>
<dbReference type="CDD" id="cd00448">
    <property type="entry name" value="YjgF_YER057c_UK114_family"/>
    <property type="match status" value="1"/>
</dbReference>
<dbReference type="Gene3D" id="3.30.1330.40">
    <property type="entry name" value="RutC-like"/>
    <property type="match status" value="1"/>
</dbReference>
<dbReference type="HAMAP" id="MF_00831">
    <property type="entry name" value="RutC"/>
    <property type="match status" value="1"/>
</dbReference>
<dbReference type="InterPro" id="IPR019898">
    <property type="entry name" value="RutC"/>
</dbReference>
<dbReference type="InterPro" id="IPR035959">
    <property type="entry name" value="RutC-like_sf"/>
</dbReference>
<dbReference type="InterPro" id="IPR006175">
    <property type="entry name" value="YjgF/YER057c/UK114"/>
</dbReference>
<dbReference type="NCBIfam" id="TIGR03610">
    <property type="entry name" value="RutC"/>
    <property type="match status" value="1"/>
</dbReference>
<dbReference type="PANTHER" id="PTHR11803">
    <property type="entry name" value="2-IMINOBUTANOATE/2-IMINOPROPANOATE DEAMINASE RIDA"/>
    <property type="match status" value="1"/>
</dbReference>
<dbReference type="PANTHER" id="PTHR11803:SF58">
    <property type="entry name" value="PROTEIN HMF1-RELATED"/>
    <property type="match status" value="1"/>
</dbReference>
<dbReference type="Pfam" id="PF01042">
    <property type="entry name" value="Ribonuc_L-PSP"/>
    <property type="match status" value="1"/>
</dbReference>
<dbReference type="SUPFAM" id="SSF55298">
    <property type="entry name" value="YjgF-like"/>
    <property type="match status" value="1"/>
</dbReference>
<feature type="chain" id="PRO_0000402764" description="3-aminoacrylate deaminase RutC">
    <location>
        <begin position="1"/>
        <end position="128"/>
    </location>
</feature>
<protein>
    <recommendedName>
        <fullName evidence="1">3-aminoacrylate deaminase RutC</fullName>
        <shortName evidence="1">3-AA deaminase</shortName>
        <ecNumber evidence="1">3.5.-.-</ecNumber>
    </recommendedName>
</protein>
<sequence length="128" mass="13694">MPKTIITPPGTGKPLAPFVPGTLADGVVYVSGTLAFDKNNNVVHVGDAAAQTRHVLETIKSVIETAGGCMDDVTFNSIFLTDWQNYAAINQVYAEYFPGDKPARYCIQCGLVKPDALIEIATVAHIGR</sequence>
<name>RUTC_SERP5</name>
<keyword id="KW-0378">Hydrolase</keyword>
<accession>A8GCT4</accession>
<comment type="function">
    <text evidence="1">Involved in pyrimidine catabolism. Catalyzes the deamination of 3-aminoacrylate to malonic semialdehyde, a reaction that can also occur spontaneously. RutC may facilitate the reaction and modulate the metabolic fitness, rather than catalyzing essential functions.</text>
</comment>
<comment type="catalytic activity">
    <reaction evidence="1">
        <text>(Z)-3-aminoacrylate + H2O + H(+) = 3-oxopropanoate + NH4(+)</text>
        <dbReference type="Rhea" id="RHEA:34947"/>
        <dbReference type="ChEBI" id="CHEBI:15377"/>
        <dbReference type="ChEBI" id="CHEBI:15378"/>
        <dbReference type="ChEBI" id="CHEBI:28938"/>
        <dbReference type="ChEBI" id="CHEBI:33190"/>
        <dbReference type="ChEBI" id="CHEBI:59894"/>
    </reaction>
</comment>
<comment type="similarity">
    <text evidence="1">Belongs to the RutC family.</text>
</comment>
<organism>
    <name type="scientific">Serratia proteamaculans (strain 568)</name>
    <dbReference type="NCBI Taxonomy" id="399741"/>
    <lineage>
        <taxon>Bacteria</taxon>
        <taxon>Pseudomonadati</taxon>
        <taxon>Pseudomonadota</taxon>
        <taxon>Gammaproteobacteria</taxon>
        <taxon>Enterobacterales</taxon>
        <taxon>Yersiniaceae</taxon>
        <taxon>Serratia</taxon>
    </lineage>
</organism>
<gene>
    <name evidence="1" type="primary">rutC</name>
    <name type="ordered locus">Spro_1821</name>
</gene>
<evidence type="ECO:0000255" key="1">
    <source>
        <dbReference type="HAMAP-Rule" id="MF_00831"/>
    </source>
</evidence>